<proteinExistence type="inferred from homology"/>
<evidence type="ECO:0000255" key="1">
    <source>
        <dbReference type="HAMAP-Rule" id="MF_00071"/>
    </source>
</evidence>
<feature type="chain" id="PRO_1000190831" description="Elongation factor 4">
    <location>
        <begin position="1"/>
        <end position="607"/>
    </location>
</feature>
<feature type="domain" description="tr-type G">
    <location>
        <begin position="11"/>
        <end position="193"/>
    </location>
</feature>
<feature type="binding site" evidence="1">
    <location>
        <begin position="23"/>
        <end position="28"/>
    </location>
    <ligand>
        <name>GTP</name>
        <dbReference type="ChEBI" id="CHEBI:37565"/>
    </ligand>
</feature>
<feature type="binding site" evidence="1">
    <location>
        <begin position="140"/>
        <end position="143"/>
    </location>
    <ligand>
        <name>GTP</name>
        <dbReference type="ChEBI" id="CHEBI:37565"/>
    </ligand>
</feature>
<accession>B8ZQ69</accession>
<comment type="function">
    <text evidence="1">Required for accurate and efficient protein synthesis under certain stress conditions. May act as a fidelity factor of the translation reaction, by catalyzing a one-codon backward translocation of tRNAs on improperly translocated ribosomes. Back-translocation proceeds from a post-translocation (POST) complex to a pre-translocation (PRE) complex, thus giving elongation factor G a second chance to translocate the tRNAs correctly. Binds to ribosomes in a GTP-dependent manner.</text>
</comment>
<comment type="catalytic activity">
    <reaction evidence="1">
        <text>GTP + H2O = GDP + phosphate + H(+)</text>
        <dbReference type="Rhea" id="RHEA:19669"/>
        <dbReference type="ChEBI" id="CHEBI:15377"/>
        <dbReference type="ChEBI" id="CHEBI:15378"/>
        <dbReference type="ChEBI" id="CHEBI:37565"/>
        <dbReference type="ChEBI" id="CHEBI:43474"/>
        <dbReference type="ChEBI" id="CHEBI:58189"/>
        <dbReference type="EC" id="3.6.5.n1"/>
    </reaction>
</comment>
<comment type="subcellular location">
    <subcellularLocation>
        <location evidence="1">Cell membrane</location>
        <topology evidence="1">Peripheral membrane protein</topology>
        <orientation evidence="1">Cytoplasmic side</orientation>
    </subcellularLocation>
</comment>
<comment type="similarity">
    <text evidence="1">Belongs to the TRAFAC class translation factor GTPase superfamily. Classic translation factor GTPase family. LepA subfamily.</text>
</comment>
<name>LEPA_STRPJ</name>
<protein>
    <recommendedName>
        <fullName evidence="1">Elongation factor 4</fullName>
        <shortName evidence="1">EF-4</shortName>
        <ecNumber evidence="1">3.6.5.n1</ecNumber>
    </recommendedName>
    <alternativeName>
        <fullName evidence="1">Ribosomal back-translocase LepA</fullName>
    </alternativeName>
</protein>
<dbReference type="EC" id="3.6.5.n1" evidence="1"/>
<dbReference type="EMBL" id="FM211187">
    <property type="protein sequence ID" value="CAR68910.1"/>
    <property type="molecule type" value="Genomic_DNA"/>
</dbReference>
<dbReference type="RefSeq" id="WP_001047216.1">
    <property type="nucleotide sequence ID" value="NC_011900.1"/>
</dbReference>
<dbReference type="SMR" id="B8ZQ69"/>
<dbReference type="KEGG" id="sne:SPN23F11000"/>
<dbReference type="HOGENOM" id="CLU_009995_3_3_9"/>
<dbReference type="GO" id="GO:0005886">
    <property type="term" value="C:plasma membrane"/>
    <property type="evidence" value="ECO:0007669"/>
    <property type="project" value="UniProtKB-SubCell"/>
</dbReference>
<dbReference type="GO" id="GO:0005525">
    <property type="term" value="F:GTP binding"/>
    <property type="evidence" value="ECO:0007669"/>
    <property type="project" value="UniProtKB-UniRule"/>
</dbReference>
<dbReference type="GO" id="GO:0003924">
    <property type="term" value="F:GTPase activity"/>
    <property type="evidence" value="ECO:0007669"/>
    <property type="project" value="UniProtKB-UniRule"/>
</dbReference>
<dbReference type="GO" id="GO:0043022">
    <property type="term" value="F:ribosome binding"/>
    <property type="evidence" value="ECO:0007669"/>
    <property type="project" value="UniProtKB-UniRule"/>
</dbReference>
<dbReference type="GO" id="GO:0003746">
    <property type="term" value="F:translation elongation factor activity"/>
    <property type="evidence" value="ECO:0007669"/>
    <property type="project" value="UniProtKB-UniRule"/>
</dbReference>
<dbReference type="GO" id="GO:0045727">
    <property type="term" value="P:positive regulation of translation"/>
    <property type="evidence" value="ECO:0007669"/>
    <property type="project" value="UniProtKB-UniRule"/>
</dbReference>
<dbReference type="CDD" id="cd03699">
    <property type="entry name" value="EF4_II"/>
    <property type="match status" value="1"/>
</dbReference>
<dbReference type="CDD" id="cd16260">
    <property type="entry name" value="EF4_III"/>
    <property type="match status" value="1"/>
</dbReference>
<dbReference type="CDD" id="cd01890">
    <property type="entry name" value="LepA"/>
    <property type="match status" value="1"/>
</dbReference>
<dbReference type="CDD" id="cd03709">
    <property type="entry name" value="lepA_C"/>
    <property type="match status" value="1"/>
</dbReference>
<dbReference type="FunFam" id="3.40.50.300:FF:000078">
    <property type="entry name" value="Elongation factor 4"/>
    <property type="match status" value="1"/>
</dbReference>
<dbReference type="FunFam" id="2.40.30.10:FF:000015">
    <property type="entry name" value="Translation factor GUF1, mitochondrial"/>
    <property type="match status" value="1"/>
</dbReference>
<dbReference type="FunFam" id="3.30.70.240:FF:000007">
    <property type="entry name" value="Translation factor GUF1, mitochondrial"/>
    <property type="match status" value="1"/>
</dbReference>
<dbReference type="FunFam" id="3.30.70.2570:FF:000001">
    <property type="entry name" value="Translation factor GUF1, mitochondrial"/>
    <property type="match status" value="1"/>
</dbReference>
<dbReference type="FunFam" id="3.30.70.870:FF:000004">
    <property type="entry name" value="Translation factor GUF1, mitochondrial"/>
    <property type="match status" value="1"/>
</dbReference>
<dbReference type="Gene3D" id="3.30.70.240">
    <property type="match status" value="1"/>
</dbReference>
<dbReference type="Gene3D" id="3.30.70.2570">
    <property type="entry name" value="Elongation factor 4, C-terminal domain"/>
    <property type="match status" value="1"/>
</dbReference>
<dbReference type="Gene3D" id="3.30.70.870">
    <property type="entry name" value="Elongation Factor G (Translational Gtpase), domain 3"/>
    <property type="match status" value="1"/>
</dbReference>
<dbReference type="Gene3D" id="3.40.50.300">
    <property type="entry name" value="P-loop containing nucleotide triphosphate hydrolases"/>
    <property type="match status" value="1"/>
</dbReference>
<dbReference type="Gene3D" id="2.40.30.10">
    <property type="entry name" value="Translation factors"/>
    <property type="match status" value="1"/>
</dbReference>
<dbReference type="HAMAP" id="MF_00071">
    <property type="entry name" value="LepA"/>
    <property type="match status" value="1"/>
</dbReference>
<dbReference type="InterPro" id="IPR006297">
    <property type="entry name" value="EF-4"/>
</dbReference>
<dbReference type="InterPro" id="IPR035647">
    <property type="entry name" value="EFG_III/V"/>
</dbReference>
<dbReference type="InterPro" id="IPR000640">
    <property type="entry name" value="EFG_V-like"/>
</dbReference>
<dbReference type="InterPro" id="IPR004161">
    <property type="entry name" value="EFTu-like_2"/>
</dbReference>
<dbReference type="InterPro" id="IPR031157">
    <property type="entry name" value="G_TR_CS"/>
</dbReference>
<dbReference type="InterPro" id="IPR038363">
    <property type="entry name" value="LepA_C_sf"/>
</dbReference>
<dbReference type="InterPro" id="IPR013842">
    <property type="entry name" value="LepA_CTD"/>
</dbReference>
<dbReference type="InterPro" id="IPR035654">
    <property type="entry name" value="LepA_IV"/>
</dbReference>
<dbReference type="InterPro" id="IPR027417">
    <property type="entry name" value="P-loop_NTPase"/>
</dbReference>
<dbReference type="InterPro" id="IPR005225">
    <property type="entry name" value="Small_GTP-bd"/>
</dbReference>
<dbReference type="InterPro" id="IPR000795">
    <property type="entry name" value="T_Tr_GTP-bd_dom"/>
</dbReference>
<dbReference type="InterPro" id="IPR009000">
    <property type="entry name" value="Transl_B-barrel_sf"/>
</dbReference>
<dbReference type="NCBIfam" id="TIGR01393">
    <property type="entry name" value="lepA"/>
    <property type="match status" value="1"/>
</dbReference>
<dbReference type="NCBIfam" id="TIGR00231">
    <property type="entry name" value="small_GTP"/>
    <property type="match status" value="1"/>
</dbReference>
<dbReference type="PANTHER" id="PTHR43512:SF4">
    <property type="entry name" value="TRANSLATION FACTOR GUF1 HOMOLOG, CHLOROPLASTIC"/>
    <property type="match status" value="1"/>
</dbReference>
<dbReference type="PANTHER" id="PTHR43512">
    <property type="entry name" value="TRANSLATION FACTOR GUF1-RELATED"/>
    <property type="match status" value="1"/>
</dbReference>
<dbReference type="Pfam" id="PF00679">
    <property type="entry name" value="EFG_C"/>
    <property type="match status" value="1"/>
</dbReference>
<dbReference type="Pfam" id="PF00009">
    <property type="entry name" value="GTP_EFTU"/>
    <property type="match status" value="1"/>
</dbReference>
<dbReference type="Pfam" id="PF03144">
    <property type="entry name" value="GTP_EFTU_D2"/>
    <property type="match status" value="1"/>
</dbReference>
<dbReference type="Pfam" id="PF06421">
    <property type="entry name" value="LepA_C"/>
    <property type="match status" value="1"/>
</dbReference>
<dbReference type="PRINTS" id="PR00315">
    <property type="entry name" value="ELONGATNFCT"/>
</dbReference>
<dbReference type="SMART" id="SM00838">
    <property type="entry name" value="EFG_C"/>
    <property type="match status" value="1"/>
</dbReference>
<dbReference type="SUPFAM" id="SSF54980">
    <property type="entry name" value="EF-G C-terminal domain-like"/>
    <property type="match status" value="2"/>
</dbReference>
<dbReference type="SUPFAM" id="SSF52540">
    <property type="entry name" value="P-loop containing nucleoside triphosphate hydrolases"/>
    <property type="match status" value="1"/>
</dbReference>
<dbReference type="SUPFAM" id="SSF50447">
    <property type="entry name" value="Translation proteins"/>
    <property type="match status" value="1"/>
</dbReference>
<dbReference type="PROSITE" id="PS00301">
    <property type="entry name" value="G_TR_1"/>
    <property type="match status" value="1"/>
</dbReference>
<dbReference type="PROSITE" id="PS51722">
    <property type="entry name" value="G_TR_2"/>
    <property type="match status" value="1"/>
</dbReference>
<organism>
    <name type="scientific">Streptococcus pneumoniae (strain ATCC 700669 / Spain 23F-1)</name>
    <dbReference type="NCBI Taxonomy" id="561276"/>
    <lineage>
        <taxon>Bacteria</taxon>
        <taxon>Bacillati</taxon>
        <taxon>Bacillota</taxon>
        <taxon>Bacilli</taxon>
        <taxon>Lactobacillales</taxon>
        <taxon>Streptococcaceae</taxon>
        <taxon>Streptococcus</taxon>
    </lineage>
</organism>
<reference key="1">
    <citation type="journal article" date="2009" name="J. Bacteriol.">
        <title>Role of conjugative elements in the evolution of the multidrug-resistant pandemic clone Streptococcus pneumoniae Spain23F ST81.</title>
        <authorList>
            <person name="Croucher N.J."/>
            <person name="Walker D."/>
            <person name="Romero P."/>
            <person name="Lennard N."/>
            <person name="Paterson G.K."/>
            <person name="Bason N.C."/>
            <person name="Mitchell A.M."/>
            <person name="Quail M.A."/>
            <person name="Andrew P.W."/>
            <person name="Parkhill J."/>
            <person name="Bentley S.D."/>
            <person name="Mitchell T.J."/>
        </authorList>
    </citation>
    <scope>NUCLEOTIDE SEQUENCE [LARGE SCALE GENOMIC DNA]</scope>
    <source>
        <strain>ATCC 700669 / Spain 23F-1</strain>
    </source>
</reference>
<sequence length="607" mass="67609">MNLEELKKRQGKIRNFSIIAHIDHGKSTLADRILEKTETVSSREMQAQLLDSMDLERERGITIKLNAIELNYTAKDGETYIFHLIDTPGHVDFTYEVSRSLAACEGAILVVDAAQGIEAQTLANVYLALDNDLEIMPIINKIDLPAADPERVRTEIEDVIGLDASEAVLASAKAGIGIEEILEQIVEKVPAPTGDVTAPLKALIFDSVYDAYRGVILQVRVMDGVVKPGDKIQLMSNSKTFDVAEVGIFTPKAVGRDFLATGDVGYIAASIKTVQDTRVGDTVTLATNPAAEPLHGYKQMNPMVFAGLYPIESNKYNDLREALEKLQLNDASLQFEPETSQALGFGFRCGFLGLLHMDVIQERLEREFNIDLIMTAPSVIYKVNLTDGESMDVSNPSEFPDPTKIATIEEPYVKAQIMVPQEFVGAVMELAQRKRGDFVTMDYIDDNRVNVIYQIPLAEIVFDFFDKLKSSTRGYASFDYELSEYRPSKLVKMDILLNGDKVDALSFIVHKDFAYERGKLIVDKLKKIIPRQQFEVPIQAAIGHKIVARTDIKALRKNVLAKCYGGDVSRKRKLLEKQKAGKKRMKSIGSVEVPQEAFLSVLSMDEE</sequence>
<keyword id="KW-1003">Cell membrane</keyword>
<keyword id="KW-0342">GTP-binding</keyword>
<keyword id="KW-0378">Hydrolase</keyword>
<keyword id="KW-0472">Membrane</keyword>
<keyword id="KW-0547">Nucleotide-binding</keyword>
<keyword id="KW-0648">Protein biosynthesis</keyword>
<gene>
    <name evidence="1" type="primary">lepA</name>
    <name type="ordered locus">SPN23F11000</name>
</gene>